<feature type="chain" id="PRO_1000134167" description="ATP synthase gamma chain">
    <location>
        <begin position="1"/>
        <end position="311"/>
    </location>
</feature>
<sequence>MPASLAAVKRRIQSTKSTRQITSAMQMVSTAKLNQIQHHTKTYQVYAEKVQAILVSLVKSHSADSLKYEQDSSLGDLFSKRPVKKTGILIITSDRGLVGSYNSNVIKSTLDKMKEDGLNADNTVFLTVGRTGAEFFKKRGMNVAYEFTGVSDVPTYREVHDVVKQAIQLYQDQVYDRLYISYSHYVNRISSQDRTEQMLPISADGLRQTEQEIGNRTAGDGVPLPASEYEIEPSDGGMLDMLVPQYAESLIYGAILDAKTSEHASSANAMRSASDNADDIISTLQLQYNRARQAAITTEITEITGGMTAQE</sequence>
<organism>
    <name type="scientific">Limosilactobacillus fermentum (strain NBRC 3956 / LMG 18251)</name>
    <name type="common">Lactobacillus fermentum</name>
    <dbReference type="NCBI Taxonomy" id="334390"/>
    <lineage>
        <taxon>Bacteria</taxon>
        <taxon>Bacillati</taxon>
        <taxon>Bacillota</taxon>
        <taxon>Bacilli</taxon>
        <taxon>Lactobacillales</taxon>
        <taxon>Lactobacillaceae</taxon>
        <taxon>Limosilactobacillus</taxon>
    </lineage>
</organism>
<dbReference type="EMBL" id="AP008937">
    <property type="protein sequence ID" value="BAG26776.1"/>
    <property type="molecule type" value="Genomic_DNA"/>
</dbReference>
<dbReference type="RefSeq" id="WP_003685874.1">
    <property type="nucleotide sequence ID" value="NC_010610.1"/>
</dbReference>
<dbReference type="SMR" id="B2GAU4"/>
<dbReference type="KEGG" id="lfe:LAF_0440"/>
<dbReference type="eggNOG" id="COG0224">
    <property type="taxonomic scope" value="Bacteria"/>
</dbReference>
<dbReference type="HOGENOM" id="CLU_050669_0_1_9"/>
<dbReference type="Proteomes" id="UP000001697">
    <property type="component" value="Chromosome"/>
</dbReference>
<dbReference type="GO" id="GO:0005886">
    <property type="term" value="C:plasma membrane"/>
    <property type="evidence" value="ECO:0007669"/>
    <property type="project" value="UniProtKB-SubCell"/>
</dbReference>
<dbReference type="GO" id="GO:0045259">
    <property type="term" value="C:proton-transporting ATP synthase complex"/>
    <property type="evidence" value="ECO:0007669"/>
    <property type="project" value="UniProtKB-KW"/>
</dbReference>
<dbReference type="GO" id="GO:0005524">
    <property type="term" value="F:ATP binding"/>
    <property type="evidence" value="ECO:0007669"/>
    <property type="project" value="UniProtKB-UniRule"/>
</dbReference>
<dbReference type="GO" id="GO:0046933">
    <property type="term" value="F:proton-transporting ATP synthase activity, rotational mechanism"/>
    <property type="evidence" value="ECO:0007669"/>
    <property type="project" value="UniProtKB-UniRule"/>
</dbReference>
<dbReference type="GO" id="GO:0042777">
    <property type="term" value="P:proton motive force-driven plasma membrane ATP synthesis"/>
    <property type="evidence" value="ECO:0007669"/>
    <property type="project" value="UniProtKB-UniRule"/>
</dbReference>
<dbReference type="CDD" id="cd12151">
    <property type="entry name" value="F1-ATPase_gamma"/>
    <property type="match status" value="1"/>
</dbReference>
<dbReference type="Gene3D" id="3.40.1380.10">
    <property type="match status" value="1"/>
</dbReference>
<dbReference type="Gene3D" id="1.10.287.80">
    <property type="entry name" value="ATP synthase, gamma subunit, helix hairpin domain"/>
    <property type="match status" value="1"/>
</dbReference>
<dbReference type="HAMAP" id="MF_00815">
    <property type="entry name" value="ATP_synth_gamma_bact"/>
    <property type="match status" value="1"/>
</dbReference>
<dbReference type="InterPro" id="IPR035968">
    <property type="entry name" value="ATP_synth_F1_ATPase_gsu"/>
</dbReference>
<dbReference type="InterPro" id="IPR000131">
    <property type="entry name" value="ATP_synth_F1_gsu"/>
</dbReference>
<dbReference type="NCBIfam" id="TIGR01146">
    <property type="entry name" value="ATPsyn_F1gamma"/>
    <property type="match status" value="1"/>
</dbReference>
<dbReference type="NCBIfam" id="NF004147">
    <property type="entry name" value="PRK05621.2-1"/>
    <property type="match status" value="1"/>
</dbReference>
<dbReference type="PANTHER" id="PTHR11693">
    <property type="entry name" value="ATP SYNTHASE GAMMA CHAIN"/>
    <property type="match status" value="1"/>
</dbReference>
<dbReference type="PANTHER" id="PTHR11693:SF22">
    <property type="entry name" value="ATP SYNTHASE SUBUNIT GAMMA, MITOCHONDRIAL"/>
    <property type="match status" value="1"/>
</dbReference>
<dbReference type="Pfam" id="PF00231">
    <property type="entry name" value="ATP-synt"/>
    <property type="match status" value="1"/>
</dbReference>
<dbReference type="PRINTS" id="PR00126">
    <property type="entry name" value="ATPASEGAMMA"/>
</dbReference>
<dbReference type="SUPFAM" id="SSF52943">
    <property type="entry name" value="ATP synthase (F1-ATPase), gamma subunit"/>
    <property type="match status" value="1"/>
</dbReference>
<name>ATPG_LIMF3</name>
<protein>
    <recommendedName>
        <fullName evidence="1">ATP synthase gamma chain</fullName>
    </recommendedName>
    <alternativeName>
        <fullName evidence="1">ATP synthase F1 sector gamma subunit</fullName>
    </alternativeName>
    <alternativeName>
        <fullName evidence="1">F-ATPase gamma subunit</fullName>
    </alternativeName>
</protein>
<proteinExistence type="inferred from homology"/>
<keyword id="KW-0066">ATP synthesis</keyword>
<keyword id="KW-1003">Cell membrane</keyword>
<keyword id="KW-0139">CF(1)</keyword>
<keyword id="KW-0375">Hydrogen ion transport</keyword>
<keyword id="KW-0406">Ion transport</keyword>
<keyword id="KW-0472">Membrane</keyword>
<keyword id="KW-1185">Reference proteome</keyword>
<keyword id="KW-0813">Transport</keyword>
<evidence type="ECO:0000255" key="1">
    <source>
        <dbReference type="HAMAP-Rule" id="MF_00815"/>
    </source>
</evidence>
<accession>B2GAU4</accession>
<reference key="1">
    <citation type="journal article" date="2008" name="DNA Res.">
        <title>Comparative genome analysis of Lactobacillus reuteri and Lactobacillus fermentum reveal a genomic island for reuterin and cobalamin production.</title>
        <authorList>
            <person name="Morita H."/>
            <person name="Toh H."/>
            <person name="Fukuda S."/>
            <person name="Horikawa H."/>
            <person name="Oshima K."/>
            <person name="Suzuki T."/>
            <person name="Murakami M."/>
            <person name="Hisamatsu S."/>
            <person name="Kato Y."/>
            <person name="Takizawa T."/>
            <person name="Fukuoka H."/>
            <person name="Yoshimura T."/>
            <person name="Itoh K."/>
            <person name="O'Sullivan D.J."/>
            <person name="McKay L.L."/>
            <person name="Ohno H."/>
            <person name="Kikuchi J."/>
            <person name="Masaoka T."/>
            <person name="Hattori M."/>
        </authorList>
    </citation>
    <scope>NUCLEOTIDE SEQUENCE [LARGE SCALE GENOMIC DNA]</scope>
    <source>
        <strain>NBRC 3956 / LMG 18251</strain>
    </source>
</reference>
<comment type="function">
    <text evidence="1">Produces ATP from ADP in the presence of a proton gradient across the membrane. The gamma chain is believed to be important in regulating ATPase activity and the flow of protons through the CF(0) complex.</text>
</comment>
<comment type="subunit">
    <text evidence="1">F-type ATPases have 2 components, CF(1) - the catalytic core - and CF(0) - the membrane proton channel. CF(1) has five subunits: alpha(3), beta(3), gamma(1), delta(1), epsilon(1). CF(0) has three main subunits: a, b and c.</text>
</comment>
<comment type="subcellular location">
    <subcellularLocation>
        <location evidence="1">Cell membrane</location>
        <topology evidence="1">Peripheral membrane protein</topology>
    </subcellularLocation>
</comment>
<comment type="similarity">
    <text evidence="1">Belongs to the ATPase gamma chain family.</text>
</comment>
<gene>
    <name evidence="1" type="primary">atpG</name>
    <name type="ordered locus">LAF_0440</name>
</gene>